<keyword id="KW-0175">Coiled coil</keyword>
<keyword id="KW-0539">Nucleus</keyword>
<keyword id="KW-1185">Reference proteome</keyword>
<keyword id="KW-0677">Repeat</keyword>
<keyword id="KW-0802">TPR repeat</keyword>
<feature type="chain" id="PRO_0000430657" description="Protein SULFUR DEFICIENCY-INDUCED 2">
    <location>
        <begin position="1"/>
        <end position="303"/>
    </location>
</feature>
<feature type="repeat" description="TPR 1" evidence="4">
    <location>
        <begin position="64"/>
        <end position="97"/>
    </location>
</feature>
<feature type="repeat" description="TPR 2" evidence="4">
    <location>
        <begin position="100"/>
        <end position="133"/>
    </location>
</feature>
<feature type="repeat" description="TPR 3" evidence="4">
    <location>
        <begin position="160"/>
        <end position="193"/>
    </location>
</feature>
<feature type="repeat" description="TPR 4" evidence="4">
    <location>
        <begin position="195"/>
        <end position="226"/>
    </location>
</feature>
<feature type="coiled-coil region" evidence="3">
    <location>
        <begin position="62"/>
        <end position="89"/>
    </location>
</feature>
<feature type="coiled-coil region" evidence="3">
    <location>
        <begin position="232"/>
        <end position="253"/>
    </location>
</feature>
<feature type="sequence conflict" description="In Ref. 4; BAE99325." ref="4">
    <original>A</original>
    <variation>P</variation>
    <location>
        <position position="18"/>
    </location>
</feature>
<proteinExistence type="evidence at transcript level"/>
<gene>
    <name evidence="8" type="ordered locus">At1g04770</name>
    <name evidence="9" type="ORF">F13M7.24</name>
</gene>
<dbReference type="EMBL" id="AC004809">
    <property type="protein sequence ID" value="AAF40459.1"/>
    <property type="status" value="ALT_SEQ"/>
    <property type="molecule type" value="Genomic_DNA"/>
</dbReference>
<dbReference type="EMBL" id="CP002684">
    <property type="protein sequence ID" value="AEE27741.1"/>
    <property type="molecule type" value="Genomic_DNA"/>
</dbReference>
<dbReference type="EMBL" id="AY139988">
    <property type="protein sequence ID" value="AAM98131.1"/>
    <property type="molecule type" value="mRNA"/>
</dbReference>
<dbReference type="EMBL" id="BT008709">
    <property type="protein sequence ID" value="AAP42722.1"/>
    <property type="molecule type" value="mRNA"/>
</dbReference>
<dbReference type="EMBL" id="AK227309">
    <property type="protein sequence ID" value="BAE99325.1"/>
    <property type="molecule type" value="mRNA"/>
</dbReference>
<dbReference type="PIR" id="G86180">
    <property type="entry name" value="G86180"/>
</dbReference>
<dbReference type="RefSeq" id="NP_171969.2">
    <property type="nucleotide sequence ID" value="NM_100355.4"/>
</dbReference>
<dbReference type="SMR" id="Q8L730"/>
<dbReference type="STRING" id="3702.Q8L730"/>
<dbReference type="PaxDb" id="3702-AT1G04770.1"/>
<dbReference type="ProteomicsDB" id="232924"/>
<dbReference type="EnsemblPlants" id="AT1G04770.1">
    <property type="protein sequence ID" value="AT1G04770.1"/>
    <property type="gene ID" value="AT1G04770"/>
</dbReference>
<dbReference type="GeneID" id="839418"/>
<dbReference type="Gramene" id="AT1G04770.1">
    <property type="protein sequence ID" value="AT1G04770.1"/>
    <property type="gene ID" value="AT1G04770"/>
</dbReference>
<dbReference type="KEGG" id="ath:AT1G04770"/>
<dbReference type="Araport" id="AT1G04770"/>
<dbReference type="TAIR" id="AT1G04770">
    <property type="gene designation" value="SDI2"/>
</dbReference>
<dbReference type="eggNOG" id="ENOG502QSSW">
    <property type="taxonomic scope" value="Eukaryota"/>
</dbReference>
<dbReference type="HOGENOM" id="CLU_057017_0_0_1"/>
<dbReference type="InParanoid" id="Q8L730"/>
<dbReference type="OMA" id="LINQWTP"/>
<dbReference type="OrthoDB" id="10258631at2759"/>
<dbReference type="PRO" id="PR:Q8L730"/>
<dbReference type="Proteomes" id="UP000006548">
    <property type="component" value="Chromosome 1"/>
</dbReference>
<dbReference type="ExpressionAtlas" id="Q8L730">
    <property type="expression patterns" value="baseline and differential"/>
</dbReference>
<dbReference type="GO" id="GO:0005634">
    <property type="term" value="C:nucleus"/>
    <property type="evidence" value="ECO:0007669"/>
    <property type="project" value="UniProtKB-SubCell"/>
</dbReference>
<dbReference type="GO" id="GO:0010438">
    <property type="term" value="P:cellular response to sulfur starvation"/>
    <property type="evidence" value="ECO:0000270"/>
    <property type="project" value="UniProtKB"/>
</dbReference>
<dbReference type="GO" id="GO:0009658">
    <property type="term" value="P:chloroplast organization"/>
    <property type="evidence" value="ECO:0000315"/>
    <property type="project" value="TAIR"/>
</dbReference>
<dbReference type="GO" id="GO:0010439">
    <property type="term" value="P:regulation of glucosinolate biosynthetic process"/>
    <property type="evidence" value="ECO:0000316"/>
    <property type="project" value="TAIR"/>
</dbReference>
<dbReference type="FunFam" id="1.25.40.10:FF:001406">
    <property type="entry name" value="Protein SULFUR DEFICIENCY-INDUCED 2"/>
    <property type="match status" value="1"/>
</dbReference>
<dbReference type="Gene3D" id="1.25.40.10">
    <property type="entry name" value="Tetratricopeptide repeat domain"/>
    <property type="match status" value="1"/>
</dbReference>
<dbReference type="InterPro" id="IPR044961">
    <property type="entry name" value="MS5/SDI1"/>
</dbReference>
<dbReference type="InterPro" id="IPR011990">
    <property type="entry name" value="TPR-like_helical_dom_sf"/>
</dbReference>
<dbReference type="InterPro" id="IPR019734">
    <property type="entry name" value="TPR_rpt"/>
</dbReference>
<dbReference type="PANTHER" id="PTHR36326">
    <property type="entry name" value="PROTEIN POLLENLESS 3-LIKE 2"/>
    <property type="match status" value="1"/>
</dbReference>
<dbReference type="PANTHER" id="PTHR36326:SF2">
    <property type="entry name" value="PROTEIN SULFUR DEFICIENCY-INDUCED 2"/>
    <property type="match status" value="1"/>
</dbReference>
<dbReference type="Pfam" id="PF13181">
    <property type="entry name" value="TPR_8"/>
    <property type="match status" value="1"/>
</dbReference>
<dbReference type="SMART" id="SM00028">
    <property type="entry name" value="TPR"/>
    <property type="match status" value="1"/>
</dbReference>
<dbReference type="SUPFAM" id="SSF48452">
    <property type="entry name" value="TPR-like"/>
    <property type="match status" value="1"/>
</dbReference>
<dbReference type="PROSITE" id="PS50005">
    <property type="entry name" value="TPR"/>
    <property type="match status" value="1"/>
</dbReference>
<dbReference type="PROSITE" id="PS50293">
    <property type="entry name" value="TPR_REGION"/>
    <property type="match status" value="1"/>
</dbReference>
<evidence type="ECO:0000250" key="1">
    <source>
        <dbReference type="UniProtKB" id="Q8GXU5"/>
    </source>
</evidence>
<evidence type="ECO:0000250" key="2">
    <source>
        <dbReference type="UniProtKB" id="Q9SUC3"/>
    </source>
</evidence>
<evidence type="ECO:0000255" key="3"/>
<evidence type="ECO:0000255" key="4">
    <source>
        <dbReference type="PROSITE-ProRule" id="PRU00339"/>
    </source>
</evidence>
<evidence type="ECO:0000269" key="5">
    <source>
    </source>
</evidence>
<evidence type="ECO:0000269" key="6">
    <source>
    </source>
</evidence>
<evidence type="ECO:0000305" key="7"/>
<evidence type="ECO:0000312" key="8">
    <source>
        <dbReference type="Araport" id="AT1G04770"/>
    </source>
</evidence>
<evidence type="ECO:0000312" key="9">
    <source>
        <dbReference type="EMBL" id="AAF40459.1"/>
    </source>
</evidence>
<evidence type="ECO:0000312" key="10">
    <source>
        <dbReference type="EMBL" id="AAM98131.1"/>
    </source>
</evidence>
<protein>
    <recommendedName>
        <fullName evidence="7">Protein SULFUR DEFICIENCY-INDUCED 2</fullName>
    </recommendedName>
</protein>
<sequence>MMMMIQRRGGERQDSSAAAYNVVHKLPHGDSPYVRAKHVQLVEKDAEAAIELFWIAIKARDRVDSALKDMALLMKQQNRAEEAIDAIQSFRDLCSRQAQESLDNVLIDLYKKCGRIEEQVELLKQKLWMIYQGEAFNGKPTKTARSHGKKFQVTVEKETSRILGNLGWAYMQLMDYTAAEAVYRKAQLIEPDANKACNLCTCLIKQGKHDEARSILFRDVLMENKEGSGDPRLMARVQELLSELKPQEEEAAASVSVECEVGIDEIAVVEGLDEFVKEWRRPYRTRRLPIFEEILPLRDQLAC</sequence>
<accession>Q8L730</accession>
<accession>Q0WU73</accession>
<accession>Q9MAS6</accession>
<name>SDI2_ARATH</name>
<comment type="function">
    <text evidence="1">Involved in the utilization of stored sulfate under sulfur-deficient conditions.</text>
</comment>
<comment type="subcellular location">
    <subcellularLocation>
        <location evidence="2">Nucleus</location>
    </subcellularLocation>
</comment>
<comment type="induction">
    <text evidence="5 6">Induced in response to sulfur deprivation.</text>
</comment>
<comment type="similarity">
    <text evidence="7">Belongs to the MS5 protein family.</text>
</comment>
<comment type="sequence caution">
    <conflict type="erroneous gene model prediction">
        <sequence resource="EMBL-CDS" id="AAF40459"/>
    </conflict>
</comment>
<organism evidence="10">
    <name type="scientific">Arabidopsis thaliana</name>
    <name type="common">Mouse-ear cress</name>
    <dbReference type="NCBI Taxonomy" id="3702"/>
    <lineage>
        <taxon>Eukaryota</taxon>
        <taxon>Viridiplantae</taxon>
        <taxon>Streptophyta</taxon>
        <taxon>Embryophyta</taxon>
        <taxon>Tracheophyta</taxon>
        <taxon>Spermatophyta</taxon>
        <taxon>Magnoliopsida</taxon>
        <taxon>eudicotyledons</taxon>
        <taxon>Gunneridae</taxon>
        <taxon>Pentapetalae</taxon>
        <taxon>rosids</taxon>
        <taxon>malvids</taxon>
        <taxon>Brassicales</taxon>
        <taxon>Brassicaceae</taxon>
        <taxon>Camelineae</taxon>
        <taxon>Arabidopsis</taxon>
    </lineage>
</organism>
<reference key="1">
    <citation type="journal article" date="2000" name="Nature">
        <title>Sequence and analysis of chromosome 1 of the plant Arabidopsis thaliana.</title>
        <authorList>
            <person name="Theologis A."/>
            <person name="Ecker J.R."/>
            <person name="Palm C.J."/>
            <person name="Federspiel N.A."/>
            <person name="Kaul S."/>
            <person name="White O."/>
            <person name="Alonso J."/>
            <person name="Altafi H."/>
            <person name="Araujo R."/>
            <person name="Bowman C.L."/>
            <person name="Brooks S.Y."/>
            <person name="Buehler E."/>
            <person name="Chan A."/>
            <person name="Chao Q."/>
            <person name="Chen H."/>
            <person name="Cheuk R.F."/>
            <person name="Chin C.W."/>
            <person name="Chung M.K."/>
            <person name="Conn L."/>
            <person name="Conway A.B."/>
            <person name="Conway A.R."/>
            <person name="Creasy T.H."/>
            <person name="Dewar K."/>
            <person name="Dunn P."/>
            <person name="Etgu P."/>
            <person name="Feldblyum T.V."/>
            <person name="Feng J.-D."/>
            <person name="Fong B."/>
            <person name="Fujii C.Y."/>
            <person name="Gill J.E."/>
            <person name="Goldsmith A.D."/>
            <person name="Haas B."/>
            <person name="Hansen N.F."/>
            <person name="Hughes B."/>
            <person name="Huizar L."/>
            <person name="Hunter J.L."/>
            <person name="Jenkins J."/>
            <person name="Johnson-Hopson C."/>
            <person name="Khan S."/>
            <person name="Khaykin E."/>
            <person name="Kim C.J."/>
            <person name="Koo H.L."/>
            <person name="Kremenetskaia I."/>
            <person name="Kurtz D.B."/>
            <person name="Kwan A."/>
            <person name="Lam B."/>
            <person name="Langin-Hooper S."/>
            <person name="Lee A."/>
            <person name="Lee J.M."/>
            <person name="Lenz C.A."/>
            <person name="Li J.H."/>
            <person name="Li Y.-P."/>
            <person name="Lin X."/>
            <person name="Liu S.X."/>
            <person name="Liu Z.A."/>
            <person name="Luros J.S."/>
            <person name="Maiti R."/>
            <person name="Marziali A."/>
            <person name="Militscher J."/>
            <person name="Miranda M."/>
            <person name="Nguyen M."/>
            <person name="Nierman W.C."/>
            <person name="Osborne B.I."/>
            <person name="Pai G."/>
            <person name="Peterson J."/>
            <person name="Pham P.K."/>
            <person name="Rizzo M."/>
            <person name="Rooney T."/>
            <person name="Rowley D."/>
            <person name="Sakano H."/>
            <person name="Salzberg S.L."/>
            <person name="Schwartz J.R."/>
            <person name="Shinn P."/>
            <person name="Southwick A.M."/>
            <person name="Sun H."/>
            <person name="Tallon L.J."/>
            <person name="Tambunga G."/>
            <person name="Toriumi M.J."/>
            <person name="Town C.D."/>
            <person name="Utterback T."/>
            <person name="Van Aken S."/>
            <person name="Vaysberg M."/>
            <person name="Vysotskaia V.S."/>
            <person name="Walker M."/>
            <person name="Wu D."/>
            <person name="Yu G."/>
            <person name="Fraser C.M."/>
            <person name="Venter J.C."/>
            <person name="Davis R.W."/>
        </authorList>
    </citation>
    <scope>NUCLEOTIDE SEQUENCE [LARGE SCALE GENOMIC DNA]</scope>
    <source>
        <strain>cv. Columbia</strain>
    </source>
</reference>
<reference key="2">
    <citation type="journal article" date="2017" name="Plant J.">
        <title>Araport11: a complete reannotation of the Arabidopsis thaliana reference genome.</title>
        <authorList>
            <person name="Cheng C.Y."/>
            <person name="Krishnakumar V."/>
            <person name="Chan A.P."/>
            <person name="Thibaud-Nissen F."/>
            <person name="Schobel S."/>
            <person name="Town C.D."/>
        </authorList>
    </citation>
    <scope>GENOME REANNOTATION</scope>
    <source>
        <strain>cv. Columbia</strain>
    </source>
</reference>
<reference key="3">
    <citation type="journal article" date="2003" name="Science">
        <title>Empirical analysis of transcriptional activity in the Arabidopsis genome.</title>
        <authorList>
            <person name="Yamada K."/>
            <person name="Lim J."/>
            <person name="Dale J.M."/>
            <person name="Chen H."/>
            <person name="Shinn P."/>
            <person name="Palm C.J."/>
            <person name="Southwick A.M."/>
            <person name="Wu H.C."/>
            <person name="Kim C.J."/>
            <person name="Nguyen M."/>
            <person name="Pham P.K."/>
            <person name="Cheuk R.F."/>
            <person name="Karlin-Newmann G."/>
            <person name="Liu S.X."/>
            <person name="Lam B."/>
            <person name="Sakano H."/>
            <person name="Wu T."/>
            <person name="Yu G."/>
            <person name="Miranda M."/>
            <person name="Quach H.L."/>
            <person name="Tripp M."/>
            <person name="Chang C.H."/>
            <person name="Lee J.M."/>
            <person name="Toriumi M.J."/>
            <person name="Chan M.M."/>
            <person name="Tang C.C."/>
            <person name="Onodera C.S."/>
            <person name="Deng J.M."/>
            <person name="Akiyama K."/>
            <person name="Ansari Y."/>
            <person name="Arakawa T."/>
            <person name="Banh J."/>
            <person name="Banno F."/>
            <person name="Bowser L."/>
            <person name="Brooks S.Y."/>
            <person name="Carninci P."/>
            <person name="Chao Q."/>
            <person name="Choy N."/>
            <person name="Enju A."/>
            <person name="Goldsmith A.D."/>
            <person name="Gurjal M."/>
            <person name="Hansen N.F."/>
            <person name="Hayashizaki Y."/>
            <person name="Johnson-Hopson C."/>
            <person name="Hsuan V.W."/>
            <person name="Iida K."/>
            <person name="Karnes M."/>
            <person name="Khan S."/>
            <person name="Koesema E."/>
            <person name="Ishida J."/>
            <person name="Jiang P.X."/>
            <person name="Jones T."/>
            <person name="Kawai J."/>
            <person name="Kamiya A."/>
            <person name="Meyers C."/>
            <person name="Nakajima M."/>
            <person name="Narusaka M."/>
            <person name="Seki M."/>
            <person name="Sakurai T."/>
            <person name="Satou M."/>
            <person name="Tamse R."/>
            <person name="Vaysberg M."/>
            <person name="Wallender E.K."/>
            <person name="Wong C."/>
            <person name="Yamamura Y."/>
            <person name="Yuan S."/>
            <person name="Shinozaki K."/>
            <person name="Davis R.W."/>
            <person name="Theologis A."/>
            <person name="Ecker J.R."/>
        </authorList>
    </citation>
    <scope>NUCLEOTIDE SEQUENCE [LARGE SCALE MRNA]</scope>
    <source>
        <strain>cv. Columbia</strain>
    </source>
</reference>
<reference key="4">
    <citation type="submission" date="2006-07" db="EMBL/GenBank/DDBJ databases">
        <title>Large-scale analysis of RIKEN Arabidopsis full-length (RAFL) cDNAs.</title>
        <authorList>
            <person name="Totoki Y."/>
            <person name="Seki M."/>
            <person name="Ishida J."/>
            <person name="Nakajima M."/>
            <person name="Enju A."/>
            <person name="Kamiya A."/>
            <person name="Narusaka M."/>
            <person name="Shin-i T."/>
            <person name="Nakagawa M."/>
            <person name="Sakamoto N."/>
            <person name="Oishi K."/>
            <person name="Kohara Y."/>
            <person name="Kobayashi M."/>
            <person name="Toyoda A."/>
            <person name="Sakaki Y."/>
            <person name="Sakurai T."/>
            <person name="Iida K."/>
            <person name="Akiyama K."/>
            <person name="Satou M."/>
            <person name="Toyoda T."/>
            <person name="Konagaya A."/>
            <person name="Carninci P."/>
            <person name="Kawai J."/>
            <person name="Hayashizaki Y."/>
            <person name="Shinozaki K."/>
        </authorList>
    </citation>
    <scope>NUCLEOTIDE SEQUENCE [LARGE SCALE MRNA]</scope>
    <source>
        <strain>cv. Columbia</strain>
    </source>
</reference>
<reference key="5">
    <citation type="journal article" date="2005" name="Plant J.">
        <title>Identification of a novel cis-acting element conferring sulfur deficiency response in Arabidopsis roots.</title>
        <authorList>
            <person name="Maruyama-Nakashita A."/>
            <person name="Nakamura Y."/>
            <person name="Watanabe-Takahashi A."/>
            <person name="Inoue E."/>
            <person name="Yamaya T."/>
            <person name="Takahashi H."/>
        </authorList>
    </citation>
    <scope>INDUCTION BY SULFUR DEPRIVATION</scope>
</reference>
<reference key="6">
    <citation type="journal article" date="2006" name="Plant Cell">
        <title>Arabidopsis SLIM1 is a central transcriptional regulator of plant sulfur response and metabolism.</title>
        <authorList>
            <person name="Maruyama-Nakashita A."/>
            <person name="Nakamura Y."/>
            <person name="Tohge T."/>
            <person name="Saito K."/>
            <person name="Takahashi H."/>
        </authorList>
    </citation>
    <scope>INDUCTION BY SULFUR DEPRIVATION</scope>
    <source>
        <strain>cv. Columbia</strain>
    </source>
</reference>